<evidence type="ECO:0000255" key="1">
    <source>
        <dbReference type="HAMAP-Rule" id="MF_00090"/>
    </source>
</evidence>
<dbReference type="EC" id="2.1.1.77" evidence="1"/>
<dbReference type="EMBL" id="AM260479">
    <property type="protein sequence ID" value="CAJ92754.1"/>
    <property type="molecule type" value="Genomic_DNA"/>
</dbReference>
<dbReference type="RefSeq" id="WP_011615192.1">
    <property type="nucleotide sequence ID" value="NC_008313.1"/>
</dbReference>
<dbReference type="SMR" id="Q0KB67"/>
<dbReference type="STRING" id="381666.H16_A1622"/>
<dbReference type="KEGG" id="reh:H16_A1622"/>
<dbReference type="PATRIC" id="fig|381666.6.peg.2006"/>
<dbReference type="eggNOG" id="COG2518">
    <property type="taxonomic scope" value="Bacteria"/>
</dbReference>
<dbReference type="HOGENOM" id="CLU_055432_2_0_4"/>
<dbReference type="OrthoDB" id="9810066at2"/>
<dbReference type="Proteomes" id="UP000008210">
    <property type="component" value="Chromosome 1"/>
</dbReference>
<dbReference type="GO" id="GO:0005737">
    <property type="term" value="C:cytoplasm"/>
    <property type="evidence" value="ECO:0007669"/>
    <property type="project" value="UniProtKB-SubCell"/>
</dbReference>
<dbReference type="GO" id="GO:0004719">
    <property type="term" value="F:protein-L-isoaspartate (D-aspartate) O-methyltransferase activity"/>
    <property type="evidence" value="ECO:0007669"/>
    <property type="project" value="UniProtKB-UniRule"/>
</dbReference>
<dbReference type="GO" id="GO:0032259">
    <property type="term" value="P:methylation"/>
    <property type="evidence" value="ECO:0007669"/>
    <property type="project" value="UniProtKB-KW"/>
</dbReference>
<dbReference type="GO" id="GO:0036211">
    <property type="term" value="P:protein modification process"/>
    <property type="evidence" value="ECO:0007669"/>
    <property type="project" value="UniProtKB-UniRule"/>
</dbReference>
<dbReference type="GO" id="GO:0030091">
    <property type="term" value="P:protein repair"/>
    <property type="evidence" value="ECO:0007669"/>
    <property type="project" value="UniProtKB-UniRule"/>
</dbReference>
<dbReference type="CDD" id="cd02440">
    <property type="entry name" value="AdoMet_MTases"/>
    <property type="match status" value="1"/>
</dbReference>
<dbReference type="FunFam" id="3.40.50.150:FF:000010">
    <property type="entry name" value="Protein-L-isoaspartate O-methyltransferase"/>
    <property type="match status" value="1"/>
</dbReference>
<dbReference type="Gene3D" id="3.40.50.150">
    <property type="entry name" value="Vaccinia Virus protein VP39"/>
    <property type="match status" value="1"/>
</dbReference>
<dbReference type="HAMAP" id="MF_00090">
    <property type="entry name" value="PIMT"/>
    <property type="match status" value="1"/>
</dbReference>
<dbReference type="InterPro" id="IPR000682">
    <property type="entry name" value="PCMT"/>
</dbReference>
<dbReference type="InterPro" id="IPR029063">
    <property type="entry name" value="SAM-dependent_MTases_sf"/>
</dbReference>
<dbReference type="NCBIfam" id="TIGR00080">
    <property type="entry name" value="pimt"/>
    <property type="match status" value="1"/>
</dbReference>
<dbReference type="NCBIfam" id="NF001453">
    <property type="entry name" value="PRK00312.1"/>
    <property type="match status" value="1"/>
</dbReference>
<dbReference type="PANTHER" id="PTHR11579">
    <property type="entry name" value="PROTEIN-L-ISOASPARTATE O-METHYLTRANSFERASE"/>
    <property type="match status" value="1"/>
</dbReference>
<dbReference type="PANTHER" id="PTHR11579:SF0">
    <property type="entry name" value="PROTEIN-L-ISOASPARTATE(D-ASPARTATE) O-METHYLTRANSFERASE"/>
    <property type="match status" value="1"/>
</dbReference>
<dbReference type="Pfam" id="PF01135">
    <property type="entry name" value="PCMT"/>
    <property type="match status" value="1"/>
</dbReference>
<dbReference type="SUPFAM" id="SSF53335">
    <property type="entry name" value="S-adenosyl-L-methionine-dependent methyltransferases"/>
    <property type="match status" value="1"/>
</dbReference>
<dbReference type="PROSITE" id="PS01279">
    <property type="entry name" value="PCMT"/>
    <property type="match status" value="1"/>
</dbReference>
<name>PIMT1_CUPNH</name>
<keyword id="KW-0963">Cytoplasm</keyword>
<keyword id="KW-0489">Methyltransferase</keyword>
<keyword id="KW-1185">Reference proteome</keyword>
<keyword id="KW-0949">S-adenosyl-L-methionine</keyword>
<keyword id="KW-0808">Transferase</keyword>
<comment type="function">
    <text evidence="1">Catalyzes the methyl esterification of L-isoaspartyl residues in peptides and proteins that result from spontaneous decomposition of normal L-aspartyl and L-asparaginyl residues. It plays a role in the repair and/or degradation of damaged proteins.</text>
</comment>
<comment type="catalytic activity">
    <reaction evidence="1">
        <text>[protein]-L-isoaspartate + S-adenosyl-L-methionine = [protein]-L-isoaspartate alpha-methyl ester + S-adenosyl-L-homocysteine</text>
        <dbReference type="Rhea" id="RHEA:12705"/>
        <dbReference type="Rhea" id="RHEA-COMP:12143"/>
        <dbReference type="Rhea" id="RHEA-COMP:12144"/>
        <dbReference type="ChEBI" id="CHEBI:57856"/>
        <dbReference type="ChEBI" id="CHEBI:59789"/>
        <dbReference type="ChEBI" id="CHEBI:90596"/>
        <dbReference type="ChEBI" id="CHEBI:90598"/>
        <dbReference type="EC" id="2.1.1.77"/>
    </reaction>
</comment>
<comment type="subcellular location">
    <subcellularLocation>
        <location evidence="1">Cytoplasm</location>
    </subcellularLocation>
</comment>
<comment type="similarity">
    <text evidence="1">Belongs to the methyltransferase superfamily. L-isoaspartyl/D-aspartyl protein methyltransferase family.</text>
</comment>
<protein>
    <recommendedName>
        <fullName evidence="1">Protein-L-isoaspartate O-methyltransferase 1</fullName>
        <ecNumber evidence="1">2.1.1.77</ecNumber>
    </recommendedName>
    <alternativeName>
        <fullName evidence="1">L-isoaspartyl protein carboxyl methyltransferase 1</fullName>
    </alternativeName>
    <alternativeName>
        <fullName evidence="1">Protein L-isoaspartyl methyltransferase 1</fullName>
    </alternativeName>
    <alternativeName>
        <fullName evidence="1">Protein-beta-aspartate methyltransferase 1</fullName>
        <shortName evidence="1">PIMT 1</shortName>
    </alternativeName>
</protein>
<gene>
    <name evidence="1" type="primary">pcm1</name>
    <name type="ordered locus">H16_A1622</name>
</gene>
<reference key="1">
    <citation type="journal article" date="2006" name="Nat. Biotechnol.">
        <title>Genome sequence of the bioplastic-producing 'Knallgas' bacterium Ralstonia eutropha H16.</title>
        <authorList>
            <person name="Pohlmann A."/>
            <person name="Fricke W.F."/>
            <person name="Reinecke F."/>
            <person name="Kusian B."/>
            <person name="Liesegang H."/>
            <person name="Cramm R."/>
            <person name="Eitinger T."/>
            <person name="Ewering C."/>
            <person name="Poetter M."/>
            <person name="Schwartz E."/>
            <person name="Strittmatter A."/>
            <person name="Voss I."/>
            <person name="Gottschalk G."/>
            <person name="Steinbuechel A."/>
            <person name="Friedrich B."/>
            <person name="Bowien B."/>
        </authorList>
    </citation>
    <scope>NUCLEOTIDE SEQUENCE [LARGE SCALE GENOMIC DNA]</scope>
    <source>
        <strain>ATCC 17699 / DSM 428 / KCTC 22496 / NCIMB 10442 / H16 / Stanier 337</strain>
    </source>
</reference>
<proteinExistence type="inferred from homology"/>
<organism>
    <name type="scientific">Cupriavidus necator (strain ATCC 17699 / DSM 428 / KCTC 22496 / NCIMB 10442 / H16 / Stanier 337)</name>
    <name type="common">Ralstonia eutropha</name>
    <dbReference type="NCBI Taxonomy" id="381666"/>
    <lineage>
        <taxon>Bacteria</taxon>
        <taxon>Pseudomonadati</taxon>
        <taxon>Pseudomonadota</taxon>
        <taxon>Betaproteobacteria</taxon>
        <taxon>Burkholderiales</taxon>
        <taxon>Burkholderiaceae</taxon>
        <taxon>Cupriavidus</taxon>
    </lineage>
</organism>
<feature type="chain" id="PRO_0000351916" description="Protein-L-isoaspartate O-methyltransferase 1">
    <location>
        <begin position="1"/>
        <end position="259"/>
    </location>
</feature>
<feature type="active site" evidence="1">
    <location>
        <position position="109"/>
    </location>
</feature>
<sequence>MTVGSLPAPLVKPSAPRPLLPILVAAIALALPCSITAADDALAPQRADMVREIAAVAAAAAAQSGRHAIDPRVMAVMGQVPRHEFVPDAQKPHAYENRPLPIGHGQTISQPYIVALMTDLMMVKPGDTVLEIGTGSGYQAAVLTGLARAVYTIEIIEPLGRHACDRLKRLAYRQVACKVGDGYYGWDEHAPYDAIVVTAAASHVPPPLIRQLKPGGRMVIPVGAQFLTQYLLLVEKSEDGTVSTRQILPVRFVPLVGKH</sequence>
<accession>Q0KB67</accession>